<organism>
    <name type="scientific">Homo sapiens</name>
    <name type="common">Human</name>
    <dbReference type="NCBI Taxonomy" id="9606"/>
    <lineage>
        <taxon>Eukaryota</taxon>
        <taxon>Metazoa</taxon>
        <taxon>Chordata</taxon>
        <taxon>Craniata</taxon>
        <taxon>Vertebrata</taxon>
        <taxon>Euteleostomi</taxon>
        <taxon>Mammalia</taxon>
        <taxon>Eutheria</taxon>
        <taxon>Euarchontoglires</taxon>
        <taxon>Primates</taxon>
        <taxon>Haplorrhini</taxon>
        <taxon>Catarrhini</taxon>
        <taxon>Hominidae</taxon>
        <taxon>Homo</taxon>
    </lineage>
</organism>
<evidence type="ECO:0000250" key="1">
    <source>
        <dbReference type="UniProtKB" id="Q6NS57"/>
    </source>
</evidence>
<evidence type="ECO:0000256" key="2">
    <source>
        <dbReference type="SAM" id="MobiDB-lite"/>
    </source>
</evidence>
<evidence type="ECO:0000269" key="3">
    <source>
    </source>
</evidence>
<evidence type="ECO:0000269" key="4">
    <source>
    </source>
</evidence>
<evidence type="ECO:0000269" key="5">
    <source>
    </source>
</evidence>
<evidence type="ECO:0000269" key="6">
    <source>
    </source>
</evidence>
<evidence type="ECO:0000269" key="7">
    <source>
    </source>
</evidence>
<evidence type="ECO:0000269" key="8">
    <source>
    </source>
</evidence>
<evidence type="ECO:0000269" key="9">
    <source>
    </source>
</evidence>
<evidence type="ECO:0000303" key="10">
    <source>
    </source>
</evidence>
<evidence type="ECO:0000303" key="11">
    <source>
    </source>
</evidence>
<evidence type="ECO:0000303" key="12">
    <source>
    </source>
</evidence>
<evidence type="ECO:0000303" key="13">
    <source>
    </source>
</evidence>
<evidence type="ECO:0000305" key="14"/>
<evidence type="ECO:0007744" key="15">
    <source>
    </source>
</evidence>
<evidence type="ECO:0007744" key="16">
    <source>
    </source>
</evidence>
<dbReference type="EMBL" id="AB177850">
    <property type="protein sequence ID" value="BAD66828.1"/>
    <property type="molecule type" value="mRNA"/>
</dbReference>
<dbReference type="EMBL" id="AB011168">
    <property type="protein sequence ID" value="BAA25522.2"/>
    <property type="status" value="ALT_INIT"/>
    <property type="molecule type" value="mRNA"/>
</dbReference>
<dbReference type="EMBL" id="AK292414">
    <property type="protein sequence ID" value="BAF85103.1"/>
    <property type="molecule type" value="mRNA"/>
</dbReference>
<dbReference type="EMBL" id="AL833267">
    <property type="status" value="NOT_ANNOTATED_CDS"/>
    <property type="molecule type" value="mRNA"/>
</dbReference>
<dbReference type="EMBL" id="AC020659">
    <property type="status" value="NOT_ANNOTATED_CDS"/>
    <property type="molecule type" value="Genomic_DNA"/>
</dbReference>
<dbReference type="EMBL" id="AC073657">
    <property type="status" value="NOT_ANNOTATED_CDS"/>
    <property type="molecule type" value="Genomic_DNA"/>
</dbReference>
<dbReference type="EMBL" id="CH471125">
    <property type="protein sequence ID" value="EAW92516.1"/>
    <property type="molecule type" value="Genomic_DNA"/>
</dbReference>
<dbReference type="EMBL" id="BC036660">
    <property type="protein sequence ID" value="AAH36660.1"/>
    <property type="molecule type" value="mRNA"/>
</dbReference>
<dbReference type="EMBL" id="BC113983">
    <property type="protein sequence ID" value="AAI13984.1"/>
    <property type="molecule type" value="mRNA"/>
</dbReference>
<dbReference type="EMBL" id="BC114493">
    <property type="protein sequence ID" value="AAI14494.1"/>
    <property type="molecule type" value="mRNA"/>
</dbReference>
<dbReference type="CCDS" id="CCDS32201.1">
    <molecule id="O60336-6"/>
</dbReference>
<dbReference type="CCDS" id="CCDS45239.1">
    <molecule id="O60336-1"/>
</dbReference>
<dbReference type="CCDS" id="CCDS58359.1">
    <molecule id="O60336-2"/>
</dbReference>
<dbReference type="PIR" id="T00270">
    <property type="entry name" value="T00270"/>
</dbReference>
<dbReference type="RefSeq" id="NP_001122080.1">
    <molecule id="O60336-1"/>
    <property type="nucleotide sequence ID" value="NM_001128608.2"/>
</dbReference>
<dbReference type="RefSeq" id="NP_001252540.1">
    <molecule id="O60336-2"/>
    <property type="nucleotide sequence ID" value="NM_001265611.2"/>
</dbReference>
<dbReference type="RefSeq" id="NP_055809.2">
    <molecule id="O60336-6"/>
    <property type="nucleotide sequence ID" value="NM_014994.3"/>
</dbReference>
<dbReference type="SMR" id="O60336"/>
<dbReference type="BioGRID" id="116650">
    <property type="interactions" value="75"/>
</dbReference>
<dbReference type="ELM" id="O60336"/>
<dbReference type="FunCoup" id="O60336">
    <property type="interactions" value="1250"/>
</dbReference>
<dbReference type="IntAct" id="O60336">
    <property type="interactions" value="64"/>
</dbReference>
<dbReference type="MINT" id="O60336"/>
<dbReference type="STRING" id="9606.ENSP00000393099"/>
<dbReference type="GlyGen" id="O60336">
    <property type="glycosylation" value="2 sites, 1 O-linked glycan (1 site)"/>
</dbReference>
<dbReference type="iPTMnet" id="O60336"/>
<dbReference type="PhosphoSitePlus" id="O60336"/>
<dbReference type="BioMuta" id="MAPKBP1"/>
<dbReference type="jPOST" id="O60336"/>
<dbReference type="MassIVE" id="O60336"/>
<dbReference type="PaxDb" id="9606-ENSP00000393099"/>
<dbReference type="PeptideAtlas" id="O60336"/>
<dbReference type="ProteomicsDB" id="49357">
    <molecule id="O60336-1"/>
</dbReference>
<dbReference type="ProteomicsDB" id="49358">
    <molecule id="O60336-2"/>
</dbReference>
<dbReference type="ProteomicsDB" id="49359">
    <molecule id="O60336-3"/>
</dbReference>
<dbReference type="ProteomicsDB" id="49360">
    <molecule id="O60336-4"/>
</dbReference>
<dbReference type="ProteomicsDB" id="49361">
    <molecule id="O60336-5"/>
</dbReference>
<dbReference type="ProteomicsDB" id="49362">
    <molecule id="O60336-6"/>
</dbReference>
<dbReference type="Pumba" id="O60336"/>
<dbReference type="Antibodypedia" id="23379">
    <property type="antibodies" value="94 antibodies from 22 providers"/>
</dbReference>
<dbReference type="DNASU" id="23005"/>
<dbReference type="Ensembl" id="ENST00000456763.6">
    <molecule id="O60336-1"/>
    <property type="protein sequence ID" value="ENSP00000393099.2"/>
    <property type="gene ID" value="ENSG00000137802.14"/>
</dbReference>
<dbReference type="Ensembl" id="ENST00000457542.7">
    <molecule id="O60336-6"/>
    <property type="protein sequence ID" value="ENSP00000397570.2"/>
    <property type="gene ID" value="ENSG00000137802.14"/>
</dbReference>
<dbReference type="Ensembl" id="ENST00000514566.5">
    <molecule id="O60336-2"/>
    <property type="protein sequence ID" value="ENSP00000426154.1"/>
    <property type="gene ID" value="ENSG00000137802.14"/>
</dbReference>
<dbReference type="GeneID" id="23005"/>
<dbReference type="KEGG" id="hsa:23005"/>
<dbReference type="MANE-Select" id="ENST00000457542.7">
    <molecule id="O60336-6"/>
    <property type="protein sequence ID" value="ENSP00000397570.2"/>
    <property type="RefSeq nucleotide sequence ID" value="NM_014994.3"/>
    <property type="RefSeq protein sequence ID" value="NP_055809.2"/>
</dbReference>
<dbReference type="UCSC" id="uc001zoj.4">
    <molecule id="O60336-1"/>
    <property type="organism name" value="human"/>
</dbReference>
<dbReference type="AGR" id="HGNC:29536"/>
<dbReference type="CTD" id="23005"/>
<dbReference type="DisGeNET" id="23005"/>
<dbReference type="GeneCards" id="MAPKBP1"/>
<dbReference type="HGNC" id="HGNC:29536">
    <property type="gene designation" value="MAPKBP1"/>
</dbReference>
<dbReference type="HPA" id="ENSG00000137802">
    <property type="expression patterns" value="Tissue enhanced (brain)"/>
</dbReference>
<dbReference type="MalaCards" id="MAPKBP1"/>
<dbReference type="MIM" id="616786">
    <property type="type" value="gene"/>
</dbReference>
<dbReference type="MIM" id="617271">
    <property type="type" value="phenotype"/>
</dbReference>
<dbReference type="neXtProt" id="NX_O60336"/>
<dbReference type="OpenTargets" id="ENSG00000137802"/>
<dbReference type="Orphanet" id="93592">
    <property type="disease" value="Juvenile nephronophthisis"/>
</dbReference>
<dbReference type="Orphanet" id="93589">
    <property type="disease" value="Late-onset nephronophthisis"/>
</dbReference>
<dbReference type="PharmGKB" id="PA142671479"/>
<dbReference type="VEuPathDB" id="HostDB:ENSG00000137802"/>
<dbReference type="eggNOG" id="KOG1408">
    <property type="taxonomic scope" value="Eukaryota"/>
</dbReference>
<dbReference type="GeneTree" id="ENSGT00940000160664"/>
<dbReference type="HOGENOM" id="CLU_002067_3_0_1"/>
<dbReference type="InParanoid" id="O60336"/>
<dbReference type="OMA" id="TTTVAYC"/>
<dbReference type="OrthoDB" id="6154712at2759"/>
<dbReference type="PAN-GO" id="O60336">
    <property type="GO annotations" value="3 GO annotations based on evolutionary models"/>
</dbReference>
<dbReference type="PhylomeDB" id="O60336"/>
<dbReference type="TreeFam" id="TF323254"/>
<dbReference type="PathwayCommons" id="O60336"/>
<dbReference type="SignaLink" id="O60336"/>
<dbReference type="BioGRID-ORCS" id="23005">
    <property type="hits" value="9 hits in 1155 CRISPR screens"/>
</dbReference>
<dbReference type="ChiTaRS" id="MAPKBP1">
    <property type="organism name" value="human"/>
</dbReference>
<dbReference type="GenomeRNAi" id="23005"/>
<dbReference type="Pharos" id="O60336">
    <property type="development level" value="Tbio"/>
</dbReference>
<dbReference type="PRO" id="PR:O60336"/>
<dbReference type="Proteomes" id="UP000005640">
    <property type="component" value="Chromosome 15"/>
</dbReference>
<dbReference type="RNAct" id="O60336">
    <property type="molecule type" value="protein"/>
</dbReference>
<dbReference type="Bgee" id="ENSG00000137802">
    <property type="expression patterns" value="Expressed in right hemisphere of cerebellum and 169 other cell types or tissues"/>
</dbReference>
<dbReference type="ExpressionAtlas" id="O60336">
    <property type="expression patterns" value="baseline and differential"/>
</dbReference>
<dbReference type="GO" id="GO:0005737">
    <property type="term" value="C:cytoplasm"/>
    <property type="evidence" value="ECO:0000314"/>
    <property type="project" value="UniProtKB"/>
</dbReference>
<dbReference type="GO" id="GO:0097431">
    <property type="term" value="C:mitotic spindle pole"/>
    <property type="evidence" value="ECO:0000314"/>
    <property type="project" value="UniProtKB"/>
</dbReference>
<dbReference type="GO" id="GO:0005730">
    <property type="term" value="C:nucleolus"/>
    <property type="evidence" value="ECO:0000314"/>
    <property type="project" value="HPA"/>
</dbReference>
<dbReference type="GO" id="GO:0005654">
    <property type="term" value="C:nucleoplasm"/>
    <property type="evidence" value="ECO:0000314"/>
    <property type="project" value="HPA"/>
</dbReference>
<dbReference type="GO" id="GO:0043124">
    <property type="term" value="P:negative regulation of canonical NF-kappaB signal transduction"/>
    <property type="evidence" value="ECO:0000315"/>
    <property type="project" value="UniProtKB"/>
</dbReference>
<dbReference type="GO" id="GO:1900425">
    <property type="term" value="P:negative regulation of defense response to bacterium"/>
    <property type="evidence" value="ECO:0000315"/>
    <property type="project" value="UniProtKB"/>
</dbReference>
<dbReference type="GO" id="GO:0032717">
    <property type="term" value="P:negative regulation of interleukin-8 production"/>
    <property type="evidence" value="ECO:0000315"/>
    <property type="project" value="UniProtKB"/>
</dbReference>
<dbReference type="GO" id="GO:0046330">
    <property type="term" value="P:positive regulation of JNK cascade"/>
    <property type="evidence" value="ECO:0000318"/>
    <property type="project" value="GO_Central"/>
</dbReference>
<dbReference type="FunFam" id="2.130.10.10:FF:000091">
    <property type="entry name" value="mitogen-activated protein kinase-binding protein 1 isoform X1"/>
    <property type="match status" value="1"/>
</dbReference>
<dbReference type="FunFam" id="2.130.10.10:FF:000314">
    <property type="entry name" value="mitogen-activated protein kinase-binding protein 1 isoform X1"/>
    <property type="match status" value="1"/>
</dbReference>
<dbReference type="FunFam" id="2.130.10.10:FF:000046">
    <property type="entry name" value="WD repeat-containing protein 62 isoform 1"/>
    <property type="match status" value="1"/>
</dbReference>
<dbReference type="FunFam" id="2.130.10.10:FF:000124">
    <property type="entry name" value="WD repeat-containing protein 62 isoform 1"/>
    <property type="match status" value="1"/>
</dbReference>
<dbReference type="Gene3D" id="2.130.10.10">
    <property type="entry name" value="YVTN repeat-like/Quinoprotein amine dehydrogenase"/>
    <property type="match status" value="4"/>
</dbReference>
<dbReference type="InterPro" id="IPR055292">
    <property type="entry name" value="MABP1"/>
</dbReference>
<dbReference type="InterPro" id="IPR015943">
    <property type="entry name" value="WD40/YVTN_repeat-like_dom_sf"/>
</dbReference>
<dbReference type="InterPro" id="IPR056161">
    <property type="entry name" value="WD40_MABP1-WDR62_1st"/>
</dbReference>
<dbReference type="InterPro" id="IPR056162">
    <property type="entry name" value="WD40_MABP1-WDR62_2nd"/>
</dbReference>
<dbReference type="InterPro" id="IPR036322">
    <property type="entry name" value="WD40_repeat_dom_sf"/>
</dbReference>
<dbReference type="InterPro" id="IPR001680">
    <property type="entry name" value="WD40_rpt"/>
</dbReference>
<dbReference type="InterPro" id="IPR056364">
    <property type="entry name" value="WDR62-MABP1_CC"/>
</dbReference>
<dbReference type="PANTHER" id="PTHR44813">
    <property type="entry name" value="MITOGEN-ACTIVATED PROTEIN KINASE-BINDING PROTEIN 1"/>
    <property type="match status" value="1"/>
</dbReference>
<dbReference type="PANTHER" id="PTHR44813:SF1">
    <property type="entry name" value="MITOGEN-ACTIVATED PROTEIN KINASE-BINDING PROTEIN 1"/>
    <property type="match status" value="1"/>
</dbReference>
<dbReference type="Pfam" id="PF24780">
    <property type="entry name" value="WD40_MABP1-WDR62_1st"/>
    <property type="match status" value="1"/>
</dbReference>
<dbReference type="Pfam" id="PF24782">
    <property type="entry name" value="WD40_MABP1-WDR62_2nd"/>
    <property type="match status" value="1"/>
</dbReference>
<dbReference type="Pfam" id="PF24795">
    <property type="entry name" value="WDR62-MABP1_CC"/>
    <property type="match status" value="1"/>
</dbReference>
<dbReference type="SMART" id="SM00320">
    <property type="entry name" value="WD40"/>
    <property type="match status" value="12"/>
</dbReference>
<dbReference type="SUPFAM" id="SSF50978">
    <property type="entry name" value="WD40 repeat-like"/>
    <property type="match status" value="2"/>
</dbReference>
<dbReference type="PROSITE" id="PS50082">
    <property type="entry name" value="WD_REPEATS_2"/>
    <property type="match status" value="1"/>
</dbReference>
<dbReference type="PROSITE" id="PS50294">
    <property type="entry name" value="WD_REPEATS_REGION"/>
    <property type="match status" value="3"/>
</dbReference>
<keyword id="KW-0007">Acetylation</keyword>
<keyword id="KW-0025">Alternative splicing</keyword>
<keyword id="KW-0963">Cytoplasm</keyword>
<keyword id="KW-0206">Cytoskeleton</keyword>
<keyword id="KW-0225">Disease variant</keyword>
<keyword id="KW-0983">Nephronophthisis</keyword>
<keyword id="KW-0539">Nucleus</keyword>
<keyword id="KW-0597">Phosphoprotein</keyword>
<keyword id="KW-1267">Proteomics identification</keyword>
<keyword id="KW-1185">Reference proteome</keyword>
<keyword id="KW-0677">Repeat</keyword>
<keyword id="KW-0853">WD repeat</keyword>
<sequence>MAVEGSTITSRIKNLLRSPSIKLRRSKAGNRREDLSSKVTLEKVLGITVSGGRGLACDPRSGLVAYPAGCVVVLFNPRKHKQHHILNSSRKTITALAFSPDGKYLVTGESGHMPAVRVWDVAEHSQVAELQEHKYGVACVAFSPSAKYIVSVGYQHDMIVNVWAWKKNIVVASNKVSSRVTAVSFSEDCSYFVTAGNRHIKFWYLDDSKTSKVNATVPLLGRSGLLGELRNNLFTDVACGRGKKADSTFCITSSGLLCEFSDRRLLDKWVELRNIDSFTTTVAHCISVSQDYIFCGCADGTVRLFNPSNLHFLSTLPRPHALGTDIASVTEASRLFSGVANARYPDTIALTFDPTNQWLSCVYNDHSIYVWDVRDPKKVGKVYSALYHSSCVWSVEVYPEVKDSNQACLPPSSFITCSSDNTIRLWNTESSGVHGSTLHRNILSSDLIKIIYVDGNTQALLDTELPGGDKADASLLDPRVGIRSVCVSPNGQHLASGDRMGTLRVHELQSLSEMLKVEAHDSEILCLEYSKPDTGLKLLASASRDRLIHVLDAGREYSLQQTLDEHSSSITAVKFAASDGQVRMISCGADKSIYFRTAQKSGDGVQFTRTHHVVRKTTLYDMDVEPSWKYTAIGCQDRNIRIFNISSGKQKKLFKGSQGEDGTLIKVQTDPSGIYIATSCSDKNLSIFDFSSGECVATMFGHSEIVTGMKFSNDCKHLISVSGDSCIFVWRLSSEMTISMRQRLAELRQRQRGGKQQGPSSPQRASGPNRHQAPSMLSPGPALSSDSDKEGEDEGTEEELPALPVLAKSTKKALASVPSPALPRSLSHWEMSRAQESVGFLDPAPAANPGPRRRGRWVQPGVELSVRSMLDLRQLETLAPSLQDPSQDSLAIIPSGPRKHGQEALETSLTSQNEKPPRPQASQPCSYPHIIRLLSQEEGVFAQDLEPAPIEDGIVYPEPSDNPTMDTSEFQVQAPARGTLGRVYPGSRSSEKHSPDSACSVDYSSSCLSSPEHPTEDSESTEPLSVDGISSDLEEPAEGDEEEEEEEGGMGPYGLQEGSPQTPDQEQFLKQHFETLASGAAPGAPVQVPERSESRSISSRFLLQVQTRPLREPSPSSSSLALMSRPAQVPQASGEQPRGNGANPPGAPPEVEPSSGNPSPQQAASVLLPRCRLNPDSSWAPKRVATASPFSGLQKAQSVHSLVPQERHEASLQAPSPGALLSREIEAQDGLGSLPPADGRPSRPHSYQNPTTSSMAKISRSISVGENLGLVAEPQAHAPIRVSPLSKLALPSRAHLVLDIPKPLPDRPTLAAFSPVTKGRAPGEAEKPGFPVGLGKAHSTTERWACLGEGTTPKPRTECQAHPGPSSPCAQQLPVSSLFQGPENLQPPPPEKTPNPMECTKPGAALSQDSEPAVSLEQCEQLVAELRGSVRQAVRLYHSVAGCKMPSAEQSRIAQLLRDTFSSVRQELEAVAGAVLSSPGSSPGAVGAEQTQALLEQYSELLLRAVERRMERKL</sequence>
<gene>
    <name type="primary">MAPKBP1</name>
    <name type="synonym">JNKBP1</name>
    <name type="synonym">KIAA0596</name>
</gene>
<feature type="initiator methionine" description="Removed" evidence="15">
    <location>
        <position position="1"/>
    </location>
</feature>
<feature type="chain" id="PRO_0000334158" description="Mitogen-activated protein kinase-binding protein 1">
    <location>
        <begin position="2"/>
        <end position="1514"/>
    </location>
</feature>
<feature type="repeat" description="WD 1">
    <location>
        <begin position="88"/>
        <end position="129"/>
    </location>
</feature>
<feature type="repeat" description="WD 2">
    <location>
        <begin position="132"/>
        <end position="173"/>
    </location>
</feature>
<feature type="repeat" description="WD 3">
    <location>
        <begin position="175"/>
        <end position="213"/>
    </location>
</feature>
<feature type="repeat" description="WD 4">
    <location>
        <begin position="276"/>
        <end position="315"/>
    </location>
</feature>
<feature type="repeat" description="WD 5">
    <location>
        <begin position="342"/>
        <end position="381"/>
    </location>
</feature>
<feature type="repeat" description="WD 6">
    <location>
        <begin position="387"/>
        <end position="436"/>
    </location>
</feature>
<feature type="repeat" description="WD 7">
    <location>
        <begin position="477"/>
        <end position="516"/>
    </location>
</feature>
<feature type="repeat" description="WD 8">
    <location>
        <begin position="519"/>
        <end position="561"/>
    </location>
</feature>
<feature type="repeat" description="WD 9">
    <location>
        <begin position="565"/>
        <end position="606"/>
    </location>
</feature>
<feature type="repeat" description="WD 10">
    <location>
        <begin position="614"/>
        <end position="653"/>
    </location>
</feature>
<feature type="repeat" description="WD 11">
    <location>
        <begin position="659"/>
        <end position="698"/>
    </location>
</feature>
<feature type="repeat" description="WD 12">
    <location>
        <begin position="701"/>
        <end position="740"/>
    </location>
</feature>
<feature type="region of interest" description="Disordered" evidence="2">
    <location>
        <begin position="748"/>
        <end position="804"/>
    </location>
</feature>
<feature type="region of interest" description="Disordered" evidence="2">
    <location>
        <begin position="880"/>
        <end position="925"/>
    </location>
</feature>
<feature type="region of interest" description="Disordered" evidence="2">
    <location>
        <begin position="951"/>
        <end position="1256"/>
    </location>
</feature>
<feature type="region of interest" description="Disordered" evidence="2">
    <location>
        <begin position="1299"/>
        <end position="1336"/>
    </location>
</feature>
<feature type="compositionally biased region" description="Acidic residues" evidence="2">
    <location>
        <begin position="789"/>
        <end position="800"/>
    </location>
</feature>
<feature type="compositionally biased region" description="Polar residues" evidence="2">
    <location>
        <begin position="905"/>
        <end position="925"/>
    </location>
</feature>
<feature type="compositionally biased region" description="Polar residues" evidence="2">
    <location>
        <begin position="961"/>
        <end position="971"/>
    </location>
</feature>
<feature type="compositionally biased region" description="Low complexity" evidence="2">
    <location>
        <begin position="996"/>
        <end position="1011"/>
    </location>
</feature>
<feature type="compositionally biased region" description="Acidic residues" evidence="2">
    <location>
        <begin position="1032"/>
        <end position="1048"/>
    </location>
</feature>
<feature type="compositionally biased region" description="Low complexity" evidence="2">
    <location>
        <begin position="1113"/>
        <end position="1126"/>
    </location>
</feature>
<feature type="compositionally biased region" description="Polar residues" evidence="2">
    <location>
        <begin position="1188"/>
        <end position="1200"/>
    </location>
</feature>
<feature type="compositionally biased region" description="Polar residues" evidence="2">
    <location>
        <begin position="1245"/>
        <end position="1256"/>
    </location>
</feature>
<feature type="modified residue" description="N-acetylalanine" evidence="15">
    <location>
        <position position="2"/>
    </location>
</feature>
<feature type="modified residue" description="Phosphoserine" evidence="16">
    <location>
        <position position="1198"/>
    </location>
</feature>
<feature type="splice variant" id="VSP_033629" description="In isoform 4." evidence="11">
    <location>
        <begin position="1"/>
        <end position="499"/>
    </location>
</feature>
<feature type="splice variant" id="VSP_033630" description="In isoform 5." evidence="10">
    <original>NA</original>
    <variation>RC</variation>
    <location>
        <begin position="214"/>
        <end position="215"/>
    </location>
</feature>
<feature type="splice variant" id="VSP_033631" description="In isoform 5." evidence="10">
    <location>
        <begin position="216"/>
        <end position="1514"/>
    </location>
</feature>
<feature type="splice variant" id="VSP_033632" description="In isoform 3." evidence="11 12">
    <location>
        <begin position="274"/>
        <end position="396"/>
    </location>
</feature>
<feature type="splice variant" id="VSP_033633" description="In isoform 2 and isoform 6." evidence="11 13">
    <location>
        <begin position="274"/>
        <end position="279"/>
    </location>
</feature>
<feature type="splice variant" id="VSP_033634" description="In isoform 2." evidence="11">
    <location>
        <begin position="1134"/>
        <end position="1410"/>
    </location>
</feature>
<feature type="splice variant" id="VSP_033635" description="In isoform 3." evidence="11 12">
    <location>
        <begin position="1411"/>
        <end position="1412"/>
    </location>
</feature>
<feature type="sequence variant" id="VAR_043343" description="In dbSNP:rs4354909.">
    <original>Y</original>
    <variation>S</variation>
    <location>
        <position position="204"/>
    </location>
</feature>
<feature type="sequence variant" id="VAR_043344" description="In dbSNP:rs1201689.">
    <original>L</original>
    <variation>V</variation>
    <location>
        <position position="313"/>
    </location>
</feature>
<feature type="sequence variant" id="VAR_077958" description="In NPHP20; uncertain significance; no effect on localization at the spindle pole; no effect on interaction with WDR62; no effect on interaction with MAPK9; dbSNP:rs1057519305." evidence="8">
    <original>R</original>
    <variation>Q</variation>
    <location>
        <position position="544"/>
    </location>
</feature>
<feature type="sequence variant" id="VAR_043345" description="In dbSNP:rs3959569." evidence="3 4 5 9">
    <original>R</original>
    <variation>P</variation>
    <location>
        <position position="1240"/>
    </location>
</feature>
<feature type="sequence conflict" description="In Ref. 8; AAH36660." evidence="14" ref="8">
    <original>P</original>
    <variation>S</variation>
    <location>
        <position position="843"/>
    </location>
</feature>
<feature type="sequence conflict" description="In Ref. 5; AL833267." evidence="14" ref="5">
    <original>K</original>
    <variation>R</variation>
    <location>
        <position position="1444"/>
    </location>
</feature>
<comment type="function">
    <text evidence="1 6">Negative regulator of NOD2 function. It down-regulates NOD2-induced processes such as activation of NF-kappa-B signaling, IL8 secretion and antibacterial response (PubMed:22700971). Involved in JNK signaling pathway (By similarity).</text>
</comment>
<comment type="subunit">
    <text evidence="1 6 7 8">Can form homodimers (via C-terminus) (PubMed:23341463). Interacts (via C-terminus) with WDR62 (via C-terminus) (PubMed:23341463, PubMed:28089251). Interacts with MAPK9 (PubMed:28089251). Interacts (via N-terminus) with NOD2; the interaction is enhanced in presence of muramyl dipeptide (MDP) (PubMed:22700971). Interacts with MAPK10 (By similarity).</text>
</comment>
<comment type="interaction">
    <interactant intactId="EBI-947402">
        <id>O60336</id>
    </interactant>
    <interactant intactId="EBI-12006944">
        <id>O43184-4</id>
        <label>ADAM12</label>
    </interactant>
    <organismsDiffer>false</organismsDiffer>
    <experiments>3</experiments>
</comment>
<comment type="interaction">
    <interactant intactId="EBI-947402">
        <id>O60336</id>
    </interactant>
    <interactant intactId="EBI-10173507">
        <id>Q6UY14-3</id>
        <label>ADAMTSL4</label>
    </interactant>
    <organismsDiffer>false</organismsDiffer>
    <experiments>6</experiments>
</comment>
<comment type="interaction">
    <interactant intactId="EBI-947402">
        <id>O60336</id>
    </interactant>
    <interactant intactId="EBI-10186621">
        <id>Q9NP73-4</id>
        <label>ALG13</label>
    </interactant>
    <organismsDiffer>false</organismsDiffer>
    <experiments>3</experiments>
</comment>
<comment type="interaction">
    <interactant intactId="EBI-947402">
        <id>O60336</id>
    </interactant>
    <interactant intactId="EBI-751587">
        <id>Q9GZU7</id>
        <label>CTDSP1</label>
    </interactant>
    <organismsDiffer>false</organismsDiffer>
    <experiments>3</experiments>
</comment>
<comment type="interaction">
    <interactant intactId="EBI-947402">
        <id>O60336</id>
    </interactant>
    <interactant intactId="EBI-3867333">
        <id>A8MQ03</id>
        <label>CYSRT1</label>
    </interactant>
    <organismsDiffer>false</organismsDiffer>
    <experiments>3</experiments>
</comment>
<comment type="interaction">
    <interactant intactId="EBI-947402">
        <id>O60336</id>
    </interactant>
    <interactant intactId="EBI-11319000">
        <id>O15353</id>
        <label>FOXN1</label>
    </interactant>
    <organismsDiffer>false</organismsDiffer>
    <experiments>3</experiments>
</comment>
<comment type="interaction">
    <interactant intactId="EBI-947402">
        <id>O60336</id>
    </interactant>
    <interactant intactId="EBI-374781">
        <id>O76003</id>
        <label>GLRX3</label>
    </interactant>
    <organismsDiffer>false</organismsDiffer>
    <experiments>6</experiments>
</comment>
<comment type="interaction">
    <interactant intactId="EBI-947402">
        <id>O60336</id>
    </interactant>
    <interactant intactId="EBI-740785">
        <id>P49639</id>
        <label>HOXA1</label>
    </interactant>
    <organismsDiffer>false</organismsDiffer>
    <experiments>5</experiments>
</comment>
<comment type="interaction">
    <interactant intactId="EBI-947402">
        <id>O60336</id>
    </interactant>
    <interactant intactId="EBI-751001">
        <id>Q14145</id>
        <label>KEAP1</label>
    </interactant>
    <organismsDiffer>false</organismsDiffer>
    <experiments>3</experiments>
</comment>
<comment type="interaction">
    <interactant intactId="EBI-947402">
        <id>O60336</id>
    </interactant>
    <interactant intactId="EBI-10981970">
        <id>Q5T749</id>
        <label>KPRP</label>
    </interactant>
    <organismsDiffer>false</organismsDiffer>
    <experiments>5</experiments>
</comment>
<comment type="interaction">
    <interactant intactId="EBI-947402">
        <id>O60336</id>
    </interactant>
    <interactant intactId="EBI-948001">
        <id>Q15323</id>
        <label>KRT31</label>
    </interactant>
    <organismsDiffer>false</organismsDiffer>
    <experiments>6</experiments>
</comment>
<comment type="interaction">
    <interactant intactId="EBI-947402">
        <id>O60336</id>
    </interactant>
    <interactant intactId="EBI-1047093">
        <id>O76011</id>
        <label>KRT34</label>
    </interactant>
    <organismsDiffer>false</organismsDiffer>
    <experiments>3</experiments>
</comment>
<comment type="interaction">
    <interactant intactId="EBI-947402">
        <id>O60336</id>
    </interactant>
    <interactant intactId="EBI-1058674">
        <id>Q92764</id>
        <label>KRT35</label>
    </interactant>
    <organismsDiffer>false</organismsDiffer>
    <experiments>3</experiments>
</comment>
<comment type="interaction">
    <interactant intactId="EBI-947402">
        <id>O60336</id>
    </interactant>
    <interactant intactId="EBI-1047263">
        <id>O76015</id>
        <label>KRT38</label>
    </interactant>
    <organismsDiffer>false</organismsDiffer>
    <experiments>3</experiments>
</comment>
<comment type="interaction">
    <interactant intactId="EBI-947402">
        <id>O60336</id>
    </interactant>
    <interactant intactId="EBI-10171697">
        <id>Q6A162</id>
        <label>KRT40</label>
    </interactant>
    <organismsDiffer>false</organismsDiffer>
    <experiments>3</experiments>
</comment>
<comment type="interaction">
    <interactant intactId="EBI-947402">
        <id>O60336</id>
    </interactant>
    <interactant intactId="EBI-9996498">
        <id>O43790</id>
        <label>KRT86</label>
    </interactant>
    <organismsDiffer>false</organismsDiffer>
    <experiments>3</experiments>
</comment>
<comment type="interaction">
    <interactant intactId="EBI-947402">
        <id>O60336</id>
    </interactant>
    <interactant intactId="EBI-11959885">
        <id>Q07627</id>
        <label>KRTAP1-1</label>
    </interactant>
    <organismsDiffer>false</organismsDiffer>
    <experiments>3</experiments>
</comment>
<comment type="interaction">
    <interactant intactId="EBI-947402">
        <id>O60336</id>
    </interactant>
    <interactant intactId="EBI-11749135">
        <id>Q8IUG1</id>
        <label>KRTAP1-3</label>
    </interactant>
    <organismsDiffer>false</organismsDiffer>
    <experiments>3</experiments>
</comment>
<comment type="interaction">
    <interactant intactId="EBI-947402">
        <id>O60336</id>
    </interactant>
    <interactant intactId="EBI-10172290">
        <id>P60409</id>
        <label>KRTAP10-7</label>
    </interactant>
    <organismsDiffer>false</organismsDiffer>
    <experiments>6</experiments>
</comment>
<comment type="interaction">
    <interactant intactId="EBI-947402">
        <id>O60336</id>
    </interactant>
    <interactant intactId="EBI-10171774">
        <id>P60410</id>
        <label>KRTAP10-8</label>
    </interactant>
    <organismsDiffer>false</organismsDiffer>
    <experiments>8</experiments>
</comment>
<comment type="interaction">
    <interactant intactId="EBI-947402">
        <id>O60336</id>
    </interactant>
    <interactant intactId="EBI-10172052">
        <id>P60411</id>
        <label>KRTAP10-9</label>
    </interactant>
    <organismsDiffer>false</organismsDiffer>
    <experiments>3</experiments>
</comment>
<comment type="interaction">
    <interactant intactId="EBI-947402">
        <id>O60336</id>
    </interactant>
    <interactant intactId="EBI-11953334">
        <id>P60328</id>
        <label>KRTAP12-3</label>
    </interactant>
    <organismsDiffer>false</organismsDiffer>
    <experiments>3</experiments>
</comment>
<comment type="interaction">
    <interactant intactId="EBI-947402">
        <id>O60336</id>
    </interactant>
    <interactant intactId="EBI-3957672">
        <id>Q6PEX3</id>
        <label>KRTAP26-1</label>
    </interactant>
    <organismsDiffer>false</organismsDiffer>
    <experiments>3</experiments>
</comment>
<comment type="interaction">
    <interactant intactId="EBI-947402">
        <id>O60336</id>
    </interactant>
    <interactant intactId="EBI-9996449">
        <id>Q9BYR8</id>
        <label>KRTAP3-1</label>
    </interactant>
    <organismsDiffer>false</organismsDiffer>
    <experiments>3</experiments>
</comment>
<comment type="interaction">
    <interactant intactId="EBI-947402">
        <id>O60336</id>
    </interactant>
    <interactant intactId="EBI-751260">
        <id>Q9BYR7</id>
        <label>KRTAP3-2</label>
    </interactant>
    <organismsDiffer>false</organismsDiffer>
    <experiments>3</experiments>
</comment>
<comment type="interaction">
    <interactant intactId="EBI-947402">
        <id>O60336</id>
    </interactant>
    <interactant intactId="EBI-739863">
        <id>Q9BQ66</id>
        <label>KRTAP4-12</label>
    </interactant>
    <organismsDiffer>false</organismsDiffer>
    <experiments>6</experiments>
</comment>
<comment type="interaction">
    <interactant intactId="EBI-947402">
        <id>O60336</id>
    </interactant>
    <interactant intactId="EBI-10250562">
        <id>Q6L8G9</id>
        <label>KRTAP5-6</label>
    </interactant>
    <organismsDiffer>false</organismsDiffer>
    <experiments>3</experiments>
</comment>
<comment type="interaction">
    <interactant intactId="EBI-947402">
        <id>O60336</id>
    </interactant>
    <interactant intactId="EBI-11987425">
        <id>Q6L8G8</id>
        <label>KRTAP5-7</label>
    </interactant>
    <organismsDiffer>false</organismsDiffer>
    <experiments>3</experiments>
</comment>
<comment type="interaction">
    <interactant intactId="EBI-947402">
        <id>O60336</id>
    </interactant>
    <interactant intactId="EBI-3958099">
        <id>P26371</id>
        <label>KRTAP5-9</label>
    </interactant>
    <organismsDiffer>false</organismsDiffer>
    <experiments>6</experiments>
</comment>
<comment type="interaction">
    <interactant intactId="EBI-947402">
        <id>O60336</id>
    </interactant>
    <interactant intactId="EBI-22311199">
        <id>Q3LI67</id>
        <label>KRTAP6-3</label>
    </interactant>
    <organismsDiffer>false</organismsDiffer>
    <experiments>3</experiments>
</comment>
<comment type="interaction">
    <interactant intactId="EBI-947402">
        <id>O60336</id>
    </interactant>
    <interactant intactId="EBI-1044640">
        <id>Q9BYQ4</id>
        <label>KRTAP9-2</label>
    </interactant>
    <organismsDiffer>false</organismsDiffer>
    <experiments>3</experiments>
</comment>
<comment type="interaction">
    <interactant intactId="EBI-947402">
        <id>O60336</id>
    </interactant>
    <interactant intactId="EBI-1043191">
        <id>Q9BYQ3</id>
        <label>KRTAP9-3</label>
    </interactant>
    <organismsDiffer>false</organismsDiffer>
    <experiments>3</experiments>
</comment>
<comment type="interaction">
    <interactant intactId="EBI-947402">
        <id>O60336</id>
    </interactant>
    <interactant intactId="EBI-10185730">
        <id>Q9BYQ2</id>
        <label>KRTAP9-4</label>
    </interactant>
    <organismsDiffer>false</organismsDiffer>
    <experiments>3</experiments>
</comment>
<comment type="interaction">
    <interactant intactId="EBI-947402">
        <id>O60336</id>
    </interactant>
    <interactant intactId="EBI-724076">
        <id>Q99750</id>
        <label>MDFI</label>
    </interactant>
    <organismsDiffer>false</organismsDiffer>
    <experiments>6</experiments>
</comment>
<comment type="interaction">
    <interactant intactId="EBI-947402">
        <id>O60336</id>
    </interactant>
    <interactant intactId="EBI-748397">
        <id>P50222</id>
        <label>MEOX2</label>
    </interactant>
    <organismsDiffer>false</organismsDiffer>
    <experiments>3</experiments>
</comment>
<comment type="interaction">
    <interactant intactId="EBI-947402">
        <id>O60336</id>
    </interactant>
    <interactant intactId="EBI-16439278">
        <id>Q6FHY5</id>
        <label>MEOX2</label>
    </interactant>
    <organismsDiffer>false</organismsDiffer>
    <experiments>3</experiments>
</comment>
<comment type="interaction">
    <interactant intactId="EBI-947402">
        <id>O60336</id>
    </interactant>
    <interactant intactId="EBI-10174029">
        <id>A6NJ78-4</id>
        <label>METTL15</label>
    </interactant>
    <organismsDiffer>false</organismsDiffer>
    <experiments>3</experiments>
</comment>
<comment type="interaction">
    <interactant intactId="EBI-947402">
        <id>O60336</id>
    </interactant>
    <interactant intactId="EBI-3906629">
        <id>P15173</id>
        <label>MYOG</label>
    </interactant>
    <organismsDiffer>false</organismsDiffer>
    <experiments>3</experiments>
</comment>
<comment type="interaction">
    <interactant intactId="EBI-947402">
        <id>O60336</id>
    </interactant>
    <interactant intactId="EBI-945833">
        <id>Q7Z3S9</id>
        <label>NOTCH2NLA</label>
    </interactant>
    <organismsDiffer>false</organismsDiffer>
    <experiments>3</experiments>
</comment>
<comment type="interaction">
    <interactant intactId="EBI-947402">
        <id>O60336</id>
    </interactant>
    <interactant intactId="EBI-22310682">
        <id>P0DPK4</id>
        <label>NOTCH2NLC</label>
    </interactant>
    <organismsDiffer>false</organismsDiffer>
    <experiments>3</experiments>
</comment>
<comment type="interaction">
    <interactant intactId="EBI-947402">
        <id>O60336</id>
    </interactant>
    <interactant intactId="EBI-726466">
        <id>O15496</id>
        <label>PLA2G10</label>
    </interactant>
    <organismsDiffer>false</organismsDiffer>
    <experiments>3</experiments>
</comment>
<comment type="interaction">
    <interactant intactId="EBI-947402">
        <id>O60336</id>
    </interactant>
    <interactant intactId="EBI-750734">
        <id>Q9NRY6</id>
        <label>PLSCR3</label>
    </interactant>
    <organismsDiffer>false</organismsDiffer>
    <experiments>3</experiments>
</comment>
<comment type="interaction">
    <interactant intactId="EBI-947402">
        <id>O60336</id>
    </interactant>
    <interactant intactId="EBI-2340624">
        <id>Q9BYM8</id>
        <label>RBCK1</label>
    </interactant>
    <organismsDiffer>false</organismsDiffer>
    <experiments>3</experiments>
</comment>
<comment type="interaction">
    <interactant intactId="EBI-947402">
        <id>O60336</id>
    </interactant>
    <interactant intactId="EBI-1052678">
        <id>O76081</id>
        <label>RGS20</label>
    </interactant>
    <organismsDiffer>false</organismsDiffer>
    <experiments>3</experiments>
</comment>
<comment type="interaction">
    <interactant intactId="EBI-947402">
        <id>O60336</id>
    </interactant>
    <interactant intactId="EBI-10178530">
        <id>O76081-6</id>
        <label>RGS20</label>
    </interactant>
    <organismsDiffer>false</organismsDiffer>
    <experiments>3</experiments>
</comment>
<comment type="interaction">
    <interactant intactId="EBI-947402">
        <id>O60336</id>
    </interactant>
    <interactant intactId="EBI-747107">
        <id>Q8IUQ4</id>
        <label>SIAH1</label>
    </interactant>
    <organismsDiffer>false</organismsDiffer>
    <experiments>3</experiments>
</comment>
<comment type="interaction">
    <interactant intactId="EBI-947402">
        <id>O60336</id>
    </interactant>
    <interactant intactId="EBI-742487">
        <id>O43597</id>
        <label>SPRY2</label>
    </interactant>
    <organismsDiffer>false</organismsDiffer>
    <experiments>3</experiments>
</comment>
<comment type="interaction">
    <interactant intactId="EBI-947402">
        <id>O60336</id>
    </interactant>
    <interactant intactId="EBI-12290641">
        <id>O43610</id>
        <label>SPRY3</label>
    </interactant>
    <organismsDiffer>false</organismsDiffer>
    <experiments>3</experiments>
</comment>
<comment type="interaction">
    <interactant intactId="EBI-947402">
        <id>O60336</id>
    </interactant>
    <interactant intactId="EBI-722877">
        <id>Q99081</id>
        <label>TCF12</label>
    </interactant>
    <organismsDiffer>false</organismsDiffer>
    <experiments>3</experiments>
</comment>
<comment type="interaction">
    <interactant intactId="EBI-947402">
        <id>O60336</id>
    </interactant>
    <interactant intactId="EBI-533224">
        <id>P15884</id>
        <label>TCF4</label>
    </interactant>
    <organismsDiffer>false</organismsDiffer>
    <experiments>3</experiments>
</comment>
<comment type="interaction">
    <interactant intactId="EBI-947402">
        <id>O60336</id>
    </interactant>
    <interactant intactId="EBI-13636688">
        <id>P15884-3</id>
        <label>TCF4</label>
    </interactant>
    <organismsDiffer>false</organismsDiffer>
    <experiments>3</experiments>
</comment>
<comment type="interaction">
    <interactant intactId="EBI-947402">
        <id>O60336</id>
    </interactant>
    <interactant intactId="EBI-10239812">
        <id>Q96M29</id>
        <label>TEKT5</label>
    </interactant>
    <organismsDiffer>false</organismsDiffer>
    <experiments>3</experiments>
</comment>
<comment type="interaction">
    <interactant intactId="EBI-947402">
        <id>O60336</id>
    </interactant>
    <interactant intactId="EBI-742397">
        <id>Q8IYF3</id>
        <label>TEX11</label>
    </interactant>
    <organismsDiffer>false</organismsDiffer>
    <experiments>3</experiments>
</comment>
<comment type="interaction">
    <interactant intactId="EBI-947402">
        <id>O60336</id>
    </interactant>
    <interactant intactId="EBI-11523345">
        <id>Q8IYF3-3</id>
        <label>TEX11</label>
    </interactant>
    <organismsDiffer>false</organismsDiffer>
    <experiments>3</experiments>
</comment>
<comment type="interaction">
    <interactant intactId="EBI-947402">
        <id>O60336</id>
    </interactant>
    <interactant intactId="EBI-719493">
        <id>P14373</id>
        <label>TRIM27</label>
    </interactant>
    <organismsDiffer>false</organismsDiffer>
    <experiments>3</experiments>
</comment>
<comment type="interaction">
    <interactant intactId="EBI-947402">
        <id>O60336</id>
    </interactant>
    <interactant intactId="EBI-5235829">
        <id>Q8IWZ5</id>
        <label>TRIM42</label>
    </interactant>
    <organismsDiffer>false</organismsDiffer>
    <experiments>3</experiments>
</comment>
<comment type="interaction">
    <interactant intactId="EBI-947402">
        <id>O60336</id>
    </interactant>
    <interactant intactId="EBI-742327">
        <id>Q15654</id>
        <label>TRIP6</label>
    </interactant>
    <organismsDiffer>false</organismsDiffer>
    <experiments>3</experiments>
</comment>
<comment type="interaction">
    <interactant intactId="EBI-947402">
        <id>O60336</id>
    </interactant>
    <interactant intactId="EBI-11721624">
        <id>P62699</id>
        <label>YPEL5</label>
    </interactant>
    <organismsDiffer>false</organismsDiffer>
    <experiments>3</experiments>
</comment>
<comment type="interaction">
    <interactant intactId="EBI-947402">
        <id>O60336</id>
    </interactant>
    <interactant intactId="EBI-9088990">
        <id>Q7Z783</id>
    </interactant>
    <organismsDiffer>false</organismsDiffer>
    <experiments>3</experiments>
</comment>
<comment type="subcellular location">
    <subcellularLocation>
        <location evidence="6 8">Cytoplasm</location>
    </subcellularLocation>
    <subcellularLocation>
        <location evidence="6">Nucleus</location>
    </subcellularLocation>
    <subcellularLocation>
        <location evidence="8">Cytoplasm</location>
        <location evidence="8">Cytoskeleton</location>
        <location evidence="8">Spindle pole</location>
    </subcellularLocation>
    <text evidence="8">Not detected in the cilium. Localized around the poles of the mitotic spindle from prophase to anaphase in mitotic cells.</text>
</comment>
<comment type="alternative products">
    <event type="alternative splicing"/>
    <isoform>
        <id>O60336-1</id>
        <name>1</name>
        <sequence type="displayed"/>
    </isoform>
    <isoform>
        <id>O60336-2</id>
        <name>2</name>
        <sequence type="described" ref="VSP_033633 VSP_033634"/>
    </isoform>
    <isoform>
        <id>O60336-3</id>
        <name>3</name>
        <sequence type="described" ref="VSP_033632 VSP_033635"/>
    </isoform>
    <isoform>
        <id>O60336-4</id>
        <name>4</name>
        <sequence type="described" ref="VSP_033629"/>
    </isoform>
    <isoform>
        <id>O60336-5</id>
        <name>5</name>
        <sequence type="described" ref="VSP_033630 VSP_033631"/>
    </isoform>
    <isoform>
        <id>O60336-6</id>
        <name>6</name>
        <sequence type="described" ref="VSP_033633"/>
    </isoform>
</comment>
<comment type="tissue specificity">
    <text evidence="6 8">Expressed in intestinal mucosa, where it is detected in epithelial cells, endothelial cells, smooth muscle cells and immune cells, such as lymphocytes (PubMed:22700971). Expressed in kidney (PubMed:28089251).</text>
</comment>
<comment type="domain">
    <text evidence="6">The N-terminal WD40 domain is necessary for the interaction with NOD2 and down-regulation of NOD2 function.</text>
</comment>
<comment type="disease" evidence="8">
    <disease id="DI-04920">
        <name>Nephronophthisis 20</name>
        <acronym>NPHP20</acronym>
        <description>A form of nephronophthisis, an autosomal recessive chronic tubulo-interstitial nephritis that progresses to end-stage renal failure. Some patients have cystic kidneys of normal size and no extrarenal manifestations, whereas others have enlarged renal size and severe extrarenal defects, including hypertrophic obstructive cardiomyopathy, aortic stenosis, pulmonary stenosis, patent ductus arteriosus, situs inversus, and periportal liver fibrosis. NPHP20 patients do not show extrarenal manifestations or evidence of a ciliopathy, such as situs inversus or polydactyly.</description>
        <dbReference type="MIM" id="617271"/>
    </disease>
    <text>The disease is caused by variants affecting the gene represented in this entry.</text>
</comment>
<comment type="sequence caution" evidence="14">
    <conflict type="erroneous initiation">
        <sequence resource="EMBL-CDS" id="BAA25522"/>
    </conflict>
</comment>
<protein>
    <recommendedName>
        <fullName>Mitogen-activated protein kinase-binding protein 1</fullName>
    </recommendedName>
    <alternativeName>
        <fullName>JNK-binding protein 1</fullName>
        <shortName>JNKBP-1</shortName>
    </alternativeName>
</protein>
<accession>O60336</accession>
<accession>A6NM93</accession>
<accession>A8K8P9</accession>
<accession>Q14CB5</accession>
<accession>Q14CD8</accession>
<accession>Q49AJ8</accession>
<accession>Q5W9G9</accession>
<reference key="1">
    <citation type="journal article" date="2004" name="J. Mol. Biol.">
        <title>Alternative splice variants encoding unstable protein domains exist in the human brain.</title>
        <authorList>
            <person name="Homma K."/>
            <person name="Kikuno R.F."/>
            <person name="Nagase T."/>
            <person name="Ohara O."/>
            <person name="Nishikawa K."/>
        </authorList>
    </citation>
    <scope>NUCLEOTIDE SEQUENCE [MRNA] (ISOFORM 3)</scope>
    <scope>VARIANT PRO-1240</scope>
    <source>
        <tissue>Brain</tissue>
    </source>
</reference>
<reference key="2">
    <citation type="journal article" date="1998" name="DNA Res.">
        <title>Prediction of the coding sequences of unidentified human genes. IX. The complete sequences of 100 new cDNA clones from brain which can code for large proteins in vitro.</title>
        <authorList>
            <person name="Nagase T."/>
            <person name="Ishikawa K."/>
            <person name="Miyajima N."/>
            <person name="Tanaka A."/>
            <person name="Kotani H."/>
            <person name="Nomura N."/>
            <person name="Ohara O."/>
        </authorList>
    </citation>
    <scope>NUCLEOTIDE SEQUENCE [LARGE SCALE MRNA] (ISOFORM 1)</scope>
    <scope>VARIANT PRO-1240</scope>
    <source>
        <tissue>Brain</tissue>
    </source>
</reference>
<reference key="3">
    <citation type="journal article" date="2002" name="DNA Res.">
        <title>Construction of expression-ready cDNA clones for KIAA genes: manual curation of 330 KIAA cDNA clones.</title>
        <authorList>
            <person name="Nakajima D."/>
            <person name="Okazaki N."/>
            <person name="Yamakawa H."/>
            <person name="Kikuno R."/>
            <person name="Ohara O."/>
            <person name="Nagase T."/>
        </authorList>
    </citation>
    <scope>SEQUENCE REVISION</scope>
</reference>
<reference key="4">
    <citation type="journal article" date="2004" name="Nat. Genet.">
        <title>Complete sequencing and characterization of 21,243 full-length human cDNAs.</title>
        <authorList>
            <person name="Ota T."/>
            <person name="Suzuki Y."/>
            <person name="Nishikawa T."/>
            <person name="Otsuki T."/>
            <person name="Sugiyama T."/>
            <person name="Irie R."/>
            <person name="Wakamatsu A."/>
            <person name="Hayashi K."/>
            <person name="Sato H."/>
            <person name="Nagai K."/>
            <person name="Kimura K."/>
            <person name="Makita H."/>
            <person name="Sekine M."/>
            <person name="Obayashi M."/>
            <person name="Nishi T."/>
            <person name="Shibahara T."/>
            <person name="Tanaka T."/>
            <person name="Ishii S."/>
            <person name="Yamamoto J."/>
            <person name="Saito K."/>
            <person name="Kawai Y."/>
            <person name="Isono Y."/>
            <person name="Nakamura Y."/>
            <person name="Nagahari K."/>
            <person name="Murakami K."/>
            <person name="Yasuda T."/>
            <person name="Iwayanagi T."/>
            <person name="Wagatsuma M."/>
            <person name="Shiratori A."/>
            <person name="Sudo H."/>
            <person name="Hosoiri T."/>
            <person name="Kaku Y."/>
            <person name="Kodaira H."/>
            <person name="Kondo H."/>
            <person name="Sugawara M."/>
            <person name="Takahashi M."/>
            <person name="Kanda K."/>
            <person name="Yokoi T."/>
            <person name="Furuya T."/>
            <person name="Kikkawa E."/>
            <person name="Omura Y."/>
            <person name="Abe K."/>
            <person name="Kamihara K."/>
            <person name="Katsuta N."/>
            <person name="Sato K."/>
            <person name="Tanikawa M."/>
            <person name="Yamazaki M."/>
            <person name="Ninomiya K."/>
            <person name="Ishibashi T."/>
            <person name="Yamashita H."/>
            <person name="Murakawa K."/>
            <person name="Fujimori K."/>
            <person name="Tanai H."/>
            <person name="Kimata M."/>
            <person name="Watanabe M."/>
            <person name="Hiraoka S."/>
            <person name="Chiba Y."/>
            <person name="Ishida S."/>
            <person name="Ono Y."/>
            <person name="Takiguchi S."/>
            <person name="Watanabe S."/>
            <person name="Yosida M."/>
            <person name="Hotuta T."/>
            <person name="Kusano J."/>
            <person name="Kanehori K."/>
            <person name="Takahashi-Fujii A."/>
            <person name="Hara H."/>
            <person name="Tanase T.-O."/>
            <person name="Nomura Y."/>
            <person name="Togiya S."/>
            <person name="Komai F."/>
            <person name="Hara R."/>
            <person name="Takeuchi K."/>
            <person name="Arita M."/>
            <person name="Imose N."/>
            <person name="Musashino K."/>
            <person name="Yuuki H."/>
            <person name="Oshima A."/>
            <person name="Sasaki N."/>
            <person name="Aotsuka S."/>
            <person name="Yoshikawa Y."/>
            <person name="Matsunawa H."/>
            <person name="Ichihara T."/>
            <person name="Shiohata N."/>
            <person name="Sano S."/>
            <person name="Moriya S."/>
            <person name="Momiyama H."/>
            <person name="Satoh N."/>
            <person name="Takami S."/>
            <person name="Terashima Y."/>
            <person name="Suzuki O."/>
            <person name="Nakagawa S."/>
            <person name="Senoh A."/>
            <person name="Mizoguchi H."/>
            <person name="Goto Y."/>
            <person name="Shimizu F."/>
            <person name="Wakebe H."/>
            <person name="Hishigaki H."/>
            <person name="Watanabe T."/>
            <person name="Sugiyama A."/>
            <person name="Takemoto M."/>
            <person name="Kawakami B."/>
            <person name="Yamazaki M."/>
            <person name="Watanabe K."/>
            <person name="Kumagai A."/>
            <person name="Itakura S."/>
            <person name="Fukuzumi Y."/>
            <person name="Fujimori Y."/>
            <person name="Komiyama M."/>
            <person name="Tashiro H."/>
            <person name="Tanigami A."/>
            <person name="Fujiwara T."/>
            <person name="Ono T."/>
            <person name="Yamada K."/>
            <person name="Fujii Y."/>
            <person name="Ozaki K."/>
            <person name="Hirao M."/>
            <person name="Ohmori Y."/>
            <person name="Kawabata A."/>
            <person name="Hikiji T."/>
            <person name="Kobatake N."/>
            <person name="Inagaki H."/>
            <person name="Ikema Y."/>
            <person name="Okamoto S."/>
            <person name="Okitani R."/>
            <person name="Kawakami T."/>
            <person name="Noguchi S."/>
            <person name="Itoh T."/>
            <person name="Shigeta K."/>
            <person name="Senba T."/>
            <person name="Matsumura K."/>
            <person name="Nakajima Y."/>
            <person name="Mizuno T."/>
            <person name="Morinaga M."/>
            <person name="Sasaki M."/>
            <person name="Togashi T."/>
            <person name="Oyama M."/>
            <person name="Hata H."/>
            <person name="Watanabe M."/>
            <person name="Komatsu T."/>
            <person name="Mizushima-Sugano J."/>
            <person name="Satoh T."/>
            <person name="Shirai Y."/>
            <person name="Takahashi Y."/>
            <person name="Nakagawa K."/>
            <person name="Okumura K."/>
            <person name="Nagase T."/>
            <person name="Nomura N."/>
            <person name="Kikuchi H."/>
            <person name="Masuho Y."/>
            <person name="Yamashita R."/>
            <person name="Nakai K."/>
            <person name="Yada T."/>
            <person name="Nakamura Y."/>
            <person name="Ohara O."/>
            <person name="Isogai T."/>
            <person name="Sugano S."/>
        </authorList>
    </citation>
    <scope>NUCLEOTIDE SEQUENCE [LARGE SCALE MRNA] (ISOFORM 5)</scope>
    <source>
        <tissue>Testis</tissue>
    </source>
</reference>
<reference key="5">
    <citation type="journal article" date="2007" name="BMC Genomics">
        <title>The full-ORF clone resource of the German cDNA consortium.</title>
        <authorList>
            <person name="Bechtel S."/>
            <person name="Rosenfelder H."/>
            <person name="Duda A."/>
            <person name="Schmidt C.P."/>
            <person name="Ernst U."/>
            <person name="Wellenreuther R."/>
            <person name="Mehrle A."/>
            <person name="Schuster C."/>
            <person name="Bahr A."/>
            <person name="Bloecker H."/>
            <person name="Heubner D."/>
            <person name="Hoerlein A."/>
            <person name="Michel G."/>
            <person name="Wedler H."/>
            <person name="Koehrer K."/>
            <person name="Ottenwaelder B."/>
            <person name="Poustka A."/>
            <person name="Wiemann S."/>
            <person name="Schupp I."/>
        </authorList>
    </citation>
    <scope>NUCLEOTIDE SEQUENCE [LARGE SCALE MRNA] (ISOFORM 6)</scope>
    <scope>VARIANT PRO-1240</scope>
    <source>
        <tissue>Skeletal muscle</tissue>
    </source>
</reference>
<reference key="6">
    <citation type="journal article" date="2006" name="Nature">
        <title>Analysis of the DNA sequence and duplication history of human chromosome 15.</title>
        <authorList>
            <person name="Zody M.C."/>
            <person name="Garber M."/>
            <person name="Sharpe T."/>
            <person name="Young S.K."/>
            <person name="Rowen L."/>
            <person name="O'Neill K."/>
            <person name="Whittaker C.A."/>
            <person name="Kamal M."/>
            <person name="Chang J.L."/>
            <person name="Cuomo C.A."/>
            <person name="Dewar K."/>
            <person name="FitzGerald M.G."/>
            <person name="Kodira C.D."/>
            <person name="Madan A."/>
            <person name="Qin S."/>
            <person name="Yang X."/>
            <person name="Abbasi N."/>
            <person name="Abouelleil A."/>
            <person name="Arachchi H.M."/>
            <person name="Baradarani L."/>
            <person name="Birditt B."/>
            <person name="Bloom S."/>
            <person name="Bloom T."/>
            <person name="Borowsky M.L."/>
            <person name="Burke J."/>
            <person name="Butler J."/>
            <person name="Cook A."/>
            <person name="DeArellano K."/>
            <person name="DeCaprio D."/>
            <person name="Dorris L. III"/>
            <person name="Dors M."/>
            <person name="Eichler E.E."/>
            <person name="Engels R."/>
            <person name="Fahey J."/>
            <person name="Fleetwood P."/>
            <person name="Friedman C."/>
            <person name="Gearin G."/>
            <person name="Hall J.L."/>
            <person name="Hensley G."/>
            <person name="Johnson E."/>
            <person name="Jones C."/>
            <person name="Kamat A."/>
            <person name="Kaur A."/>
            <person name="Locke D.P."/>
            <person name="Madan A."/>
            <person name="Munson G."/>
            <person name="Jaffe D.B."/>
            <person name="Lui A."/>
            <person name="Macdonald P."/>
            <person name="Mauceli E."/>
            <person name="Naylor J.W."/>
            <person name="Nesbitt R."/>
            <person name="Nicol R."/>
            <person name="O'Leary S.B."/>
            <person name="Ratcliffe A."/>
            <person name="Rounsley S."/>
            <person name="She X."/>
            <person name="Sneddon K.M.B."/>
            <person name="Stewart S."/>
            <person name="Sougnez C."/>
            <person name="Stone S.M."/>
            <person name="Topham K."/>
            <person name="Vincent D."/>
            <person name="Wang S."/>
            <person name="Zimmer A.R."/>
            <person name="Birren B.W."/>
            <person name="Hood L."/>
            <person name="Lander E.S."/>
            <person name="Nusbaum C."/>
        </authorList>
    </citation>
    <scope>NUCLEOTIDE SEQUENCE [LARGE SCALE GENOMIC DNA]</scope>
</reference>
<reference key="7">
    <citation type="submission" date="2005-07" db="EMBL/GenBank/DDBJ databases">
        <authorList>
            <person name="Mural R.J."/>
            <person name="Istrail S."/>
            <person name="Sutton G.G."/>
            <person name="Florea L."/>
            <person name="Halpern A.L."/>
            <person name="Mobarry C.M."/>
            <person name="Lippert R."/>
            <person name="Walenz B."/>
            <person name="Shatkay H."/>
            <person name="Dew I."/>
            <person name="Miller J.R."/>
            <person name="Flanigan M.J."/>
            <person name="Edwards N.J."/>
            <person name="Bolanos R."/>
            <person name="Fasulo D."/>
            <person name="Halldorsson B.V."/>
            <person name="Hannenhalli S."/>
            <person name="Turner R."/>
            <person name="Yooseph S."/>
            <person name="Lu F."/>
            <person name="Nusskern D.R."/>
            <person name="Shue B.C."/>
            <person name="Zheng X.H."/>
            <person name="Zhong F."/>
            <person name="Delcher A.L."/>
            <person name="Huson D.H."/>
            <person name="Kravitz S.A."/>
            <person name="Mouchard L."/>
            <person name="Reinert K."/>
            <person name="Remington K.A."/>
            <person name="Clark A.G."/>
            <person name="Waterman M.S."/>
            <person name="Eichler E.E."/>
            <person name="Adams M.D."/>
            <person name="Hunkapiller M.W."/>
            <person name="Myers E.W."/>
            <person name="Venter J.C."/>
        </authorList>
    </citation>
    <scope>NUCLEOTIDE SEQUENCE [LARGE SCALE GENOMIC DNA]</scope>
</reference>
<reference key="8">
    <citation type="journal article" date="2004" name="Genome Res.">
        <title>The status, quality, and expansion of the NIH full-length cDNA project: the Mammalian Gene Collection (MGC).</title>
        <authorList>
            <consortium name="The MGC Project Team"/>
        </authorList>
    </citation>
    <scope>NUCLEOTIDE SEQUENCE [LARGE SCALE MRNA] (ISOFORMS 1; 2; 3 AND 4)</scope>
    <scope>VARIANT PRO-1240</scope>
    <source>
        <tissue>Testis</tissue>
    </source>
</reference>
<reference key="9">
    <citation type="journal article" date="2012" name="J. Biol. Chem.">
        <title>The c-Jun N-terminal kinase (JNK)-binding protein (JNKBP1) acts as a negative regulator of NOD2 protein signaling by inhibiting its oligomerization process.</title>
        <authorList>
            <person name="Lecat A."/>
            <person name="Di Valentin E."/>
            <person name="Somja J."/>
            <person name="Jourdan S."/>
            <person name="Fillet M."/>
            <person name="Kufer T.A."/>
            <person name="Habraken Y."/>
            <person name="Sadzot C."/>
            <person name="Louis E."/>
            <person name="Delvenne P."/>
            <person name="Piette J."/>
            <person name="Legrand-Poels S."/>
        </authorList>
    </citation>
    <scope>FUNCTION</scope>
    <scope>TISSUE SPECIFICITY</scope>
    <scope>SUBCELLULAR LOCATION</scope>
    <scope>INTERACTION WITH NOD2</scope>
</reference>
<reference key="10">
    <citation type="journal article" date="2012" name="Proc. Natl. Acad. Sci. U.S.A.">
        <title>N-terminal acetylome analyses and functional insights of the N-terminal acetyltransferase NatB.</title>
        <authorList>
            <person name="Van Damme P."/>
            <person name="Lasa M."/>
            <person name="Polevoda B."/>
            <person name="Gazquez C."/>
            <person name="Elosegui-Artola A."/>
            <person name="Kim D.S."/>
            <person name="De Juan-Pardo E."/>
            <person name="Demeyer K."/>
            <person name="Hole K."/>
            <person name="Larrea E."/>
            <person name="Timmerman E."/>
            <person name="Prieto J."/>
            <person name="Arnesen T."/>
            <person name="Sherman F."/>
            <person name="Gevaert K."/>
            <person name="Aldabe R."/>
        </authorList>
    </citation>
    <scope>ACETYLATION [LARGE SCALE ANALYSIS] AT ALA-2</scope>
    <scope>CLEAVAGE OF INITIATOR METHIONINE [LARGE SCALE ANALYSIS]</scope>
    <scope>IDENTIFICATION BY MASS SPECTROMETRY [LARGE SCALE ANALYSIS]</scope>
</reference>
<reference key="11">
    <citation type="journal article" date="2013" name="J. Biol. Chem.">
        <title>Identification and analysis of a novel dimerization domain shared by various members of c-Jun N-terminal kinase (JNK) scaffold proteins.</title>
        <authorList>
            <person name="Cohen-Katsenelson K."/>
            <person name="Wasserman T."/>
            <person name="Darlyuk-Saadon I."/>
            <person name="Rabner A."/>
            <person name="Glaser F."/>
            <person name="Aronheim A."/>
        </authorList>
    </citation>
    <scope>SUBUNIT</scope>
    <scope>INTERACTION WITH WDR62</scope>
</reference>
<reference key="12">
    <citation type="journal article" date="2013" name="J. Proteome Res.">
        <title>Toward a comprehensive characterization of a human cancer cell phosphoproteome.</title>
        <authorList>
            <person name="Zhou H."/>
            <person name="Di Palma S."/>
            <person name="Preisinger C."/>
            <person name="Peng M."/>
            <person name="Polat A.N."/>
            <person name="Heck A.J."/>
            <person name="Mohammed S."/>
        </authorList>
    </citation>
    <scope>PHOSPHORYLATION [LARGE SCALE ANALYSIS] AT SER-1198</scope>
    <scope>IDENTIFICATION BY MASS SPECTROMETRY [LARGE SCALE ANALYSIS]</scope>
    <source>
        <tissue>Erythroleukemia</tissue>
    </source>
</reference>
<reference key="13">
    <citation type="journal article" date="2017" name="Am. J. Hum. Genet.">
        <title>Mutations in MAPKBP1 cause juvenile or late-onset cilia-independent nephronophthisis.</title>
        <authorList>
            <person name="Macia M.S."/>
            <person name="Halbritter J."/>
            <person name="Delous M."/>
            <person name="Bredrup C."/>
            <person name="Gutter A."/>
            <person name="Filhol E."/>
            <person name="Mellgren A.E."/>
            <person name="Leh S."/>
            <person name="Bizet A."/>
            <person name="Braun D.A."/>
            <person name="Gee H.Y."/>
            <person name="Silbermann F."/>
            <person name="Henry C."/>
            <person name="Krug P."/>
            <person name="Bole-Feysot C."/>
            <person name="Nitschke P."/>
            <person name="Joly D."/>
            <person name="Nicoud P."/>
            <person name="Paget A."/>
            <person name="Haugland H."/>
            <person name="Brackmann D."/>
            <person name="Ahmet N."/>
            <person name="Sandford R."/>
            <person name="Cengiz N."/>
            <person name="Knappskog P.M."/>
            <person name="Boman H."/>
            <person name="Linghu B."/>
            <person name="Yang F."/>
            <person name="Oakeley E.J."/>
            <person name="Saint Mezard P."/>
            <person name="Sailer A.W."/>
            <person name="Johansson S."/>
            <person name="Roedahl E."/>
            <person name="Saunier S."/>
            <person name="Hildebrandt F."/>
            <person name="Benmerah A."/>
        </authorList>
    </citation>
    <scope>TISSUE SPECIFICITY</scope>
    <scope>SUBCELLULAR LOCATION</scope>
    <scope>INTERACTION WITH WDR62 AND MAPK9</scope>
    <scope>INVOLVEMENT IN NPHP20</scope>
    <scope>VARIANT NPHP20 GLN-544</scope>
    <scope>CHARACTERIZATION OF VARIANT NPHP20 GLN-544</scope>
</reference>
<reference key="14">
    <citation type="journal article" date="2017" name="Am. J. Hum. Genet.">
        <authorList>
            <person name="Macia M.S."/>
            <person name="Halbritter J."/>
            <person name="Delous M."/>
            <person name="Bredrup C."/>
            <person name="Gutter A."/>
            <person name="Filhol E."/>
            <person name="Mellgren A.E."/>
            <person name="Leh S."/>
            <person name="Bizet A."/>
            <person name="Braun D.A."/>
            <person name="Gee H.Y."/>
            <person name="Silbermann F."/>
            <person name="Henry C."/>
            <person name="Krug P."/>
            <person name="Bole-Feysot C."/>
            <person name="Nitschke P."/>
            <person name="Joly D."/>
            <person name="Nicoud P."/>
            <person name="Paget A."/>
            <person name="Haugland H."/>
            <person name="Brackmann D."/>
            <person name="Ahmet N."/>
            <person name="Sandford R."/>
            <person name="Cengiz N."/>
            <person name="Knappskog P.M."/>
            <person name="Boman H."/>
            <person name="Linghu B."/>
            <person name="Yang F."/>
            <person name="Oakeley E.J."/>
            <person name="Saint Mezard P."/>
            <person name="Sailer A.W."/>
            <person name="Johansson S."/>
            <person name="Roedahl E."/>
            <person name="Saunier S."/>
            <person name="Hildebrandt F."/>
            <person name="Benmerah A."/>
        </authorList>
    </citation>
    <scope>ERRATUM OF PUBMED:28089251</scope>
</reference>
<name>MABP1_HUMAN</name>
<proteinExistence type="evidence at protein level"/>